<keyword id="KW-0687">Ribonucleoprotein</keyword>
<keyword id="KW-0689">Ribosomal protein</keyword>
<evidence type="ECO:0000255" key="1">
    <source>
        <dbReference type="HAMAP-Rule" id="MF_00340"/>
    </source>
</evidence>
<evidence type="ECO:0000256" key="2">
    <source>
        <dbReference type="SAM" id="MobiDB-lite"/>
    </source>
</evidence>
<evidence type="ECO:0000305" key="3"/>
<dbReference type="EMBL" id="FM211192">
    <property type="protein sequence ID" value="CAR70266.1"/>
    <property type="molecule type" value="Genomic_DNA"/>
</dbReference>
<dbReference type="SMR" id="B8ZU08"/>
<dbReference type="KEGG" id="mlb:MLBr00173"/>
<dbReference type="HOGENOM" id="CLU_203263_0_0_11"/>
<dbReference type="Proteomes" id="UP000006900">
    <property type="component" value="Chromosome"/>
</dbReference>
<dbReference type="GO" id="GO:0015934">
    <property type="term" value="C:large ribosomal subunit"/>
    <property type="evidence" value="ECO:0007669"/>
    <property type="project" value="InterPro"/>
</dbReference>
<dbReference type="GO" id="GO:0003735">
    <property type="term" value="F:structural constituent of ribosome"/>
    <property type="evidence" value="ECO:0007669"/>
    <property type="project" value="InterPro"/>
</dbReference>
<dbReference type="GO" id="GO:0006412">
    <property type="term" value="P:translation"/>
    <property type="evidence" value="ECO:0007669"/>
    <property type="project" value="UniProtKB-UniRule"/>
</dbReference>
<dbReference type="HAMAP" id="MF_00340">
    <property type="entry name" value="Ribosomal_bL32"/>
    <property type="match status" value="1"/>
</dbReference>
<dbReference type="InterPro" id="IPR002677">
    <property type="entry name" value="Ribosomal_bL32"/>
</dbReference>
<dbReference type="InterPro" id="IPR011332">
    <property type="entry name" value="Ribosomal_zn-bd"/>
</dbReference>
<dbReference type="NCBIfam" id="TIGR01031">
    <property type="entry name" value="rpmF_bact"/>
    <property type="match status" value="1"/>
</dbReference>
<dbReference type="Pfam" id="PF01783">
    <property type="entry name" value="Ribosomal_L32p"/>
    <property type="match status" value="1"/>
</dbReference>
<dbReference type="SUPFAM" id="SSF57829">
    <property type="entry name" value="Zn-binding ribosomal proteins"/>
    <property type="match status" value="1"/>
</dbReference>
<organism>
    <name type="scientific">Mycobacterium leprae (strain Br4923)</name>
    <dbReference type="NCBI Taxonomy" id="561304"/>
    <lineage>
        <taxon>Bacteria</taxon>
        <taxon>Bacillati</taxon>
        <taxon>Actinomycetota</taxon>
        <taxon>Actinomycetes</taxon>
        <taxon>Mycobacteriales</taxon>
        <taxon>Mycobacteriaceae</taxon>
        <taxon>Mycobacterium</taxon>
    </lineage>
</organism>
<name>RL32_MYCLB</name>
<proteinExistence type="inferred from homology"/>
<feature type="chain" id="PRO_1000195986" description="Large ribosomal subunit protein bL32">
    <location>
        <begin position="1"/>
        <end position="57"/>
    </location>
</feature>
<feature type="region of interest" description="Disordered" evidence="2">
    <location>
        <begin position="1"/>
        <end position="20"/>
    </location>
</feature>
<feature type="compositionally biased region" description="Basic residues" evidence="2">
    <location>
        <begin position="1"/>
        <end position="19"/>
    </location>
</feature>
<accession>B8ZU08</accession>
<reference key="1">
    <citation type="journal article" date="2009" name="Nat. Genet.">
        <title>Comparative genomic and phylogeographic analysis of Mycobacterium leprae.</title>
        <authorList>
            <person name="Monot M."/>
            <person name="Honore N."/>
            <person name="Garnier T."/>
            <person name="Zidane N."/>
            <person name="Sherafi D."/>
            <person name="Paniz-Mondolfi A."/>
            <person name="Matsuoka M."/>
            <person name="Taylor G.M."/>
            <person name="Donoghue H.D."/>
            <person name="Bouwman A."/>
            <person name="Mays S."/>
            <person name="Watson C."/>
            <person name="Lockwood D."/>
            <person name="Khamispour A."/>
            <person name="Dowlati Y."/>
            <person name="Jianping S."/>
            <person name="Rea T.H."/>
            <person name="Vera-Cabrera L."/>
            <person name="Stefani M.M."/>
            <person name="Banu S."/>
            <person name="Macdonald M."/>
            <person name="Sapkota B.R."/>
            <person name="Spencer J.S."/>
            <person name="Thomas J."/>
            <person name="Harshman K."/>
            <person name="Singh P."/>
            <person name="Busso P."/>
            <person name="Gattiker A."/>
            <person name="Rougemont J."/>
            <person name="Brennan P.J."/>
            <person name="Cole S.T."/>
        </authorList>
    </citation>
    <scope>NUCLEOTIDE SEQUENCE [LARGE SCALE GENOMIC DNA]</scope>
    <source>
        <strain>Br4923</strain>
    </source>
</reference>
<gene>
    <name evidence="1" type="primary">rpmF</name>
    <name type="ordered locus">MLBr00173</name>
</gene>
<comment type="similarity">
    <text evidence="1">Belongs to the bacterial ribosomal protein bL32 family.</text>
</comment>
<protein>
    <recommendedName>
        <fullName evidence="1">Large ribosomal subunit protein bL32</fullName>
    </recommendedName>
    <alternativeName>
        <fullName evidence="3">50S ribosomal protein L32</fullName>
    </alternativeName>
</protein>
<sequence>MATPKRRMSRANTRSRRAQWKAARTELVGVTVAGQRHKVPRRLLKAARLGLIDLDRR</sequence>